<reference key="1">
    <citation type="journal article" date="2006" name="Proc. Natl. Acad. Sci. U.S.A.">
        <title>Identification of genes subject to positive selection in uropathogenic strains of Escherichia coli: a comparative genomics approach.</title>
        <authorList>
            <person name="Chen S.L."/>
            <person name="Hung C.-S."/>
            <person name="Xu J."/>
            <person name="Reigstad C.S."/>
            <person name="Magrini V."/>
            <person name="Sabo A."/>
            <person name="Blasiar D."/>
            <person name="Bieri T."/>
            <person name="Meyer R.R."/>
            <person name="Ozersky P."/>
            <person name="Armstrong J.R."/>
            <person name="Fulton R.S."/>
            <person name="Latreille J.P."/>
            <person name="Spieth J."/>
            <person name="Hooton T.M."/>
            <person name="Mardis E.R."/>
            <person name="Hultgren S.J."/>
            <person name="Gordon J.I."/>
        </authorList>
    </citation>
    <scope>NUCLEOTIDE SEQUENCE [LARGE SCALE GENOMIC DNA]</scope>
    <source>
        <strain>UTI89 / UPEC</strain>
    </source>
</reference>
<dbReference type="EC" id="2.8.1.-" evidence="1"/>
<dbReference type="EMBL" id="CP000243">
    <property type="protein sequence ID" value="ABE07093.1"/>
    <property type="molecule type" value="Genomic_DNA"/>
</dbReference>
<dbReference type="RefSeq" id="WP_001157413.1">
    <property type="nucleotide sequence ID" value="NZ_CP064825.1"/>
</dbReference>
<dbReference type="SMR" id="Q1RC21"/>
<dbReference type="KEGG" id="eci:UTI89_C1615"/>
<dbReference type="HOGENOM" id="CLU_026481_0_0_6"/>
<dbReference type="Proteomes" id="UP000001952">
    <property type="component" value="Chromosome"/>
</dbReference>
<dbReference type="GO" id="GO:0005737">
    <property type="term" value="C:cytoplasm"/>
    <property type="evidence" value="ECO:0007669"/>
    <property type="project" value="UniProtKB-SubCell"/>
</dbReference>
<dbReference type="GO" id="GO:0051539">
    <property type="term" value="F:4 iron, 4 sulfur cluster binding"/>
    <property type="evidence" value="ECO:0007669"/>
    <property type="project" value="UniProtKB-UniRule"/>
</dbReference>
<dbReference type="GO" id="GO:0005524">
    <property type="term" value="F:ATP binding"/>
    <property type="evidence" value="ECO:0007669"/>
    <property type="project" value="UniProtKB-UniRule"/>
</dbReference>
<dbReference type="GO" id="GO:0000287">
    <property type="term" value="F:magnesium ion binding"/>
    <property type="evidence" value="ECO:0007669"/>
    <property type="project" value="UniProtKB-UniRule"/>
</dbReference>
<dbReference type="GO" id="GO:0016783">
    <property type="term" value="F:sulfurtransferase activity"/>
    <property type="evidence" value="ECO:0007669"/>
    <property type="project" value="UniProtKB-UniRule"/>
</dbReference>
<dbReference type="GO" id="GO:0000049">
    <property type="term" value="F:tRNA binding"/>
    <property type="evidence" value="ECO:0007669"/>
    <property type="project" value="UniProtKB-KW"/>
</dbReference>
<dbReference type="GO" id="GO:0034227">
    <property type="term" value="P:tRNA thio-modification"/>
    <property type="evidence" value="ECO:0007669"/>
    <property type="project" value="UniProtKB-UniRule"/>
</dbReference>
<dbReference type="CDD" id="cd24138">
    <property type="entry name" value="TtcA-like"/>
    <property type="match status" value="1"/>
</dbReference>
<dbReference type="FunFam" id="3.40.50.620:FF:000046">
    <property type="entry name" value="tRNA-cytidine(32) 2-sulfurtransferase"/>
    <property type="match status" value="1"/>
</dbReference>
<dbReference type="Gene3D" id="3.40.50.620">
    <property type="entry name" value="HUPs"/>
    <property type="match status" value="1"/>
</dbReference>
<dbReference type="HAMAP" id="MF_01850">
    <property type="entry name" value="TtcA"/>
    <property type="match status" value="1"/>
</dbReference>
<dbReference type="InterPro" id="IPR014729">
    <property type="entry name" value="Rossmann-like_a/b/a_fold"/>
</dbReference>
<dbReference type="InterPro" id="IPR011063">
    <property type="entry name" value="TilS/TtcA_N"/>
</dbReference>
<dbReference type="InterPro" id="IPR012089">
    <property type="entry name" value="tRNA_Cyd_32_2_STrfase"/>
</dbReference>
<dbReference type="InterPro" id="IPR035107">
    <property type="entry name" value="tRNA_thiolation_TtcA_Ctu1"/>
</dbReference>
<dbReference type="NCBIfam" id="NF007972">
    <property type="entry name" value="PRK10696.1"/>
    <property type="match status" value="1"/>
</dbReference>
<dbReference type="PANTHER" id="PTHR43686:SF1">
    <property type="entry name" value="AMINOTRAN_5 DOMAIN-CONTAINING PROTEIN"/>
    <property type="match status" value="1"/>
</dbReference>
<dbReference type="PANTHER" id="PTHR43686">
    <property type="entry name" value="SULFURTRANSFERASE-RELATED"/>
    <property type="match status" value="1"/>
</dbReference>
<dbReference type="Pfam" id="PF01171">
    <property type="entry name" value="ATP_bind_3"/>
    <property type="match status" value="1"/>
</dbReference>
<dbReference type="PIRSF" id="PIRSF004976">
    <property type="entry name" value="ATPase_YdaO"/>
    <property type="match status" value="1"/>
</dbReference>
<dbReference type="SUPFAM" id="SSF52402">
    <property type="entry name" value="Adenine nucleotide alpha hydrolases-like"/>
    <property type="match status" value="1"/>
</dbReference>
<evidence type="ECO:0000255" key="1">
    <source>
        <dbReference type="HAMAP-Rule" id="MF_01850"/>
    </source>
</evidence>
<feature type="chain" id="PRO_0000348720" description="tRNA-cytidine(32) 2-sulfurtransferase">
    <location>
        <begin position="1"/>
        <end position="311"/>
    </location>
</feature>
<feature type="short sequence motif" description="PP-loop motif" evidence="1">
    <location>
        <begin position="47"/>
        <end position="52"/>
    </location>
</feature>
<feature type="binding site" evidence="1">
    <location>
        <position position="122"/>
    </location>
    <ligand>
        <name>[4Fe-4S] cluster</name>
        <dbReference type="ChEBI" id="CHEBI:49883"/>
    </ligand>
</feature>
<feature type="binding site" evidence="1">
    <location>
        <position position="125"/>
    </location>
    <ligand>
        <name>[4Fe-4S] cluster</name>
        <dbReference type="ChEBI" id="CHEBI:49883"/>
    </ligand>
</feature>
<feature type="binding site" evidence="1">
    <location>
        <position position="213"/>
    </location>
    <ligand>
        <name>[4Fe-4S] cluster</name>
        <dbReference type="ChEBI" id="CHEBI:49883"/>
    </ligand>
</feature>
<sequence length="311" mass="35504">MQENQQITKKEQYNLNKLQKRLRRNVGEAIADFNMIEEGDRIMVCLSGGKDSYTMLEILRNLQQSAPINFSLVAVNLDQKQPGFPEHVLPEYLETLGVEYKIVEENTYGIVKEKIPEGKTTCSLCSRLRRGILYRTATELGATKIALGHHRDDILQTLFLNMFYGGKMKGMPPKLMSDDGKHIVIRPLAYCREKDIQRFADAKAFPIIPCNLCGSQPNLQRQVIADMLRDWDKRYPGRIETMFSAMQNVVPSHLCDTNLFDFKGITHGSEVVNGGDLAFDREEIPLQPSGWQPEEDENQLDELRLNVVEVK</sequence>
<protein>
    <recommendedName>
        <fullName evidence="1">tRNA-cytidine(32) 2-sulfurtransferase</fullName>
        <ecNumber evidence="1">2.8.1.-</ecNumber>
    </recommendedName>
    <alternativeName>
        <fullName evidence="1">Two-thiocytidine biosynthesis protein A</fullName>
    </alternativeName>
    <alternativeName>
        <fullName evidence="1">tRNA 2-thiocytidine biosynthesis protein TtcA</fullName>
    </alternativeName>
</protein>
<name>TTCA_ECOUT</name>
<accession>Q1RC21</accession>
<gene>
    <name evidence="1" type="primary">ttcA</name>
    <name type="ordered locus">UTI89_C1615</name>
</gene>
<proteinExistence type="inferred from homology"/>
<keyword id="KW-0004">4Fe-4S</keyword>
<keyword id="KW-0067">ATP-binding</keyword>
<keyword id="KW-0963">Cytoplasm</keyword>
<keyword id="KW-0408">Iron</keyword>
<keyword id="KW-0411">Iron-sulfur</keyword>
<keyword id="KW-0460">Magnesium</keyword>
<keyword id="KW-0479">Metal-binding</keyword>
<keyword id="KW-0547">Nucleotide-binding</keyword>
<keyword id="KW-0694">RNA-binding</keyword>
<keyword id="KW-0808">Transferase</keyword>
<keyword id="KW-0819">tRNA processing</keyword>
<keyword id="KW-0820">tRNA-binding</keyword>
<comment type="function">
    <text evidence="1">Catalyzes the ATP-dependent 2-thiolation of cytidine in position 32 of tRNA, to form 2-thiocytidine (s(2)C32). The sulfur atoms are provided by the cysteine/cysteine desulfurase (IscS) system.</text>
</comment>
<comment type="catalytic activity">
    <reaction evidence="1">
        <text>cytidine(32) in tRNA + S-sulfanyl-L-cysteinyl-[cysteine desulfurase] + AH2 + ATP = 2-thiocytidine(32) in tRNA + L-cysteinyl-[cysteine desulfurase] + A + AMP + diphosphate + H(+)</text>
        <dbReference type="Rhea" id="RHEA:57048"/>
        <dbReference type="Rhea" id="RHEA-COMP:10288"/>
        <dbReference type="Rhea" id="RHEA-COMP:12157"/>
        <dbReference type="Rhea" id="RHEA-COMP:12158"/>
        <dbReference type="Rhea" id="RHEA-COMP:14821"/>
        <dbReference type="ChEBI" id="CHEBI:13193"/>
        <dbReference type="ChEBI" id="CHEBI:15378"/>
        <dbReference type="ChEBI" id="CHEBI:17499"/>
        <dbReference type="ChEBI" id="CHEBI:29950"/>
        <dbReference type="ChEBI" id="CHEBI:30616"/>
        <dbReference type="ChEBI" id="CHEBI:33019"/>
        <dbReference type="ChEBI" id="CHEBI:61963"/>
        <dbReference type="ChEBI" id="CHEBI:82748"/>
        <dbReference type="ChEBI" id="CHEBI:141453"/>
        <dbReference type="ChEBI" id="CHEBI:456215"/>
    </reaction>
    <physiologicalReaction direction="left-to-right" evidence="1">
        <dbReference type="Rhea" id="RHEA:57049"/>
    </physiologicalReaction>
</comment>
<comment type="cofactor">
    <cofactor evidence="1">
        <name>Mg(2+)</name>
        <dbReference type="ChEBI" id="CHEBI:18420"/>
    </cofactor>
</comment>
<comment type="cofactor">
    <cofactor evidence="1">
        <name>[4Fe-4S] cluster</name>
        <dbReference type="ChEBI" id="CHEBI:49883"/>
    </cofactor>
    <text evidence="1">Binds 1 [4Fe-4S] cluster per subunit. The cluster is chelated by three Cys residues, the fourth Fe has a free coordination site that may bind a sulfur atom transferred from the persulfide of IscS.</text>
</comment>
<comment type="pathway">
    <text evidence="1">tRNA modification.</text>
</comment>
<comment type="subunit">
    <text evidence="1">Homodimer.</text>
</comment>
<comment type="subcellular location">
    <subcellularLocation>
        <location evidence="1">Cytoplasm</location>
    </subcellularLocation>
</comment>
<comment type="miscellaneous">
    <text evidence="1">The thiolation reaction likely consists of two steps: a first activation step by ATP to form an adenylated intermediate of the target base of tRNA, and a second nucleophilic substitution step of the sulfur (S) atom supplied by the hydrosulfide attached to the Fe-S cluster.</text>
</comment>
<comment type="similarity">
    <text evidence="1">Belongs to the TtcA family.</text>
</comment>
<organism>
    <name type="scientific">Escherichia coli (strain UTI89 / UPEC)</name>
    <dbReference type="NCBI Taxonomy" id="364106"/>
    <lineage>
        <taxon>Bacteria</taxon>
        <taxon>Pseudomonadati</taxon>
        <taxon>Pseudomonadota</taxon>
        <taxon>Gammaproteobacteria</taxon>
        <taxon>Enterobacterales</taxon>
        <taxon>Enterobacteriaceae</taxon>
        <taxon>Escherichia</taxon>
    </lineage>
</organism>